<organism>
    <name type="scientific">Pseudoalteromonas atlantica (strain T6c / ATCC BAA-1087)</name>
    <dbReference type="NCBI Taxonomy" id="3042615"/>
    <lineage>
        <taxon>Bacteria</taxon>
        <taxon>Pseudomonadati</taxon>
        <taxon>Pseudomonadota</taxon>
        <taxon>Gammaproteobacteria</taxon>
        <taxon>Alteromonadales</taxon>
        <taxon>Alteromonadaceae</taxon>
        <taxon>Paraglaciecola</taxon>
    </lineage>
</organism>
<reference key="1">
    <citation type="submission" date="2006-06" db="EMBL/GenBank/DDBJ databases">
        <title>Complete sequence of Pseudoalteromonas atlantica T6c.</title>
        <authorList>
            <consortium name="US DOE Joint Genome Institute"/>
            <person name="Copeland A."/>
            <person name="Lucas S."/>
            <person name="Lapidus A."/>
            <person name="Barry K."/>
            <person name="Detter J.C."/>
            <person name="Glavina del Rio T."/>
            <person name="Hammon N."/>
            <person name="Israni S."/>
            <person name="Dalin E."/>
            <person name="Tice H."/>
            <person name="Pitluck S."/>
            <person name="Saunders E."/>
            <person name="Brettin T."/>
            <person name="Bruce D."/>
            <person name="Han C."/>
            <person name="Tapia R."/>
            <person name="Gilna P."/>
            <person name="Schmutz J."/>
            <person name="Larimer F."/>
            <person name="Land M."/>
            <person name="Hauser L."/>
            <person name="Kyrpides N."/>
            <person name="Kim E."/>
            <person name="Karls A.C."/>
            <person name="Bartlett D."/>
            <person name="Higgins B.P."/>
            <person name="Richardson P."/>
        </authorList>
    </citation>
    <scope>NUCLEOTIDE SEQUENCE [LARGE SCALE GENOMIC DNA]</scope>
    <source>
        <strain>T6c / ATCC BAA-1087</strain>
    </source>
</reference>
<dbReference type="EC" id="3.5.4.16" evidence="1"/>
<dbReference type="EMBL" id="CP000388">
    <property type="protein sequence ID" value="ABG38833.1"/>
    <property type="molecule type" value="Genomic_DNA"/>
</dbReference>
<dbReference type="RefSeq" id="WP_011573231.1">
    <property type="nucleotide sequence ID" value="NC_008228.1"/>
</dbReference>
<dbReference type="SMR" id="Q15Z55"/>
<dbReference type="STRING" id="342610.Patl_0301"/>
<dbReference type="KEGG" id="pat:Patl_0301"/>
<dbReference type="eggNOG" id="COG1469">
    <property type="taxonomic scope" value="Bacteria"/>
</dbReference>
<dbReference type="HOGENOM" id="CLU_062816_0_0_6"/>
<dbReference type="OrthoDB" id="239637at2"/>
<dbReference type="UniPathway" id="UPA00848">
    <property type="reaction ID" value="UER00151"/>
</dbReference>
<dbReference type="Proteomes" id="UP000001981">
    <property type="component" value="Chromosome"/>
</dbReference>
<dbReference type="GO" id="GO:0003934">
    <property type="term" value="F:GTP cyclohydrolase I activity"/>
    <property type="evidence" value="ECO:0007669"/>
    <property type="project" value="UniProtKB-UniRule"/>
</dbReference>
<dbReference type="GO" id="GO:0046654">
    <property type="term" value="P:tetrahydrofolate biosynthetic process"/>
    <property type="evidence" value="ECO:0007669"/>
    <property type="project" value="UniProtKB-UniRule"/>
</dbReference>
<dbReference type="Gene3D" id="3.10.270.10">
    <property type="entry name" value="Urate Oxidase"/>
    <property type="match status" value="1"/>
</dbReference>
<dbReference type="HAMAP" id="MF_01527_B">
    <property type="entry name" value="GTP_cyclohydrol_B"/>
    <property type="match status" value="1"/>
</dbReference>
<dbReference type="InterPro" id="IPR022838">
    <property type="entry name" value="GTP_cyclohydrolase_FolE2"/>
</dbReference>
<dbReference type="InterPro" id="IPR003801">
    <property type="entry name" value="GTP_cyclohydrolase_FolE2/MptA"/>
</dbReference>
<dbReference type="NCBIfam" id="NF010200">
    <property type="entry name" value="PRK13674.1-1"/>
    <property type="match status" value="1"/>
</dbReference>
<dbReference type="PANTHER" id="PTHR36445">
    <property type="entry name" value="GTP CYCLOHYDROLASE MPTA"/>
    <property type="match status" value="1"/>
</dbReference>
<dbReference type="PANTHER" id="PTHR36445:SF1">
    <property type="entry name" value="GTP CYCLOHYDROLASE MPTA"/>
    <property type="match status" value="1"/>
</dbReference>
<dbReference type="Pfam" id="PF02649">
    <property type="entry name" value="GCHY-1"/>
    <property type="match status" value="1"/>
</dbReference>
<accession>Q15Z55</accession>
<proteinExistence type="inferred from homology"/>
<gene>
    <name evidence="1" type="primary">folE2</name>
    <name type="ordered locus">Patl_0301</name>
</gene>
<evidence type="ECO:0000255" key="1">
    <source>
        <dbReference type="HAMAP-Rule" id="MF_01527"/>
    </source>
</evidence>
<name>GCH4_PSEA6</name>
<sequence>MGMTLPDITSSENVASAAPLKWVGMEGITVPIQVPMSGEVPAYVNAKTDVYVSLDKSDAKGIHMSRLFLKLNDILGTELLSSTSLTALLNELILSQQGLSQGAKVNLDFALTLRKKALLSNEFGYQSYPIGISTQLVKGVARTVLSLTIAYSSTCPCSSALAQQALSDAISQRFDDEMISKSELTQWITSKTGAVATPHSQRSYAYIKLTLDGDALPNLPELITLLETTIGTPVQTAVKRQDEQAFAKLNAENLMFCEDAARRLKRALERKENVLDYWFKVEHQESLHAHNAVAIDFKDNADEDTM</sequence>
<feature type="chain" id="PRO_0000289505" description="GTP cyclohydrolase FolE2">
    <location>
        <begin position="1"/>
        <end position="306"/>
    </location>
</feature>
<feature type="site" description="May be catalytically important" evidence="1">
    <location>
        <position position="155"/>
    </location>
</feature>
<keyword id="KW-0378">Hydrolase</keyword>
<protein>
    <recommendedName>
        <fullName evidence="1">GTP cyclohydrolase FolE2</fullName>
        <ecNumber evidence="1">3.5.4.16</ecNumber>
    </recommendedName>
</protein>
<comment type="function">
    <text evidence="1">Converts GTP to 7,8-dihydroneopterin triphosphate.</text>
</comment>
<comment type="catalytic activity">
    <reaction evidence="1">
        <text>GTP + H2O = 7,8-dihydroneopterin 3'-triphosphate + formate + H(+)</text>
        <dbReference type="Rhea" id="RHEA:17473"/>
        <dbReference type="ChEBI" id="CHEBI:15377"/>
        <dbReference type="ChEBI" id="CHEBI:15378"/>
        <dbReference type="ChEBI" id="CHEBI:15740"/>
        <dbReference type="ChEBI" id="CHEBI:37565"/>
        <dbReference type="ChEBI" id="CHEBI:58462"/>
        <dbReference type="EC" id="3.5.4.16"/>
    </reaction>
</comment>
<comment type="pathway">
    <text evidence="1">Cofactor biosynthesis; 7,8-dihydroneopterin triphosphate biosynthesis; 7,8-dihydroneopterin triphosphate from GTP: step 1/1.</text>
</comment>
<comment type="similarity">
    <text evidence="1">Belongs to the GTP cyclohydrolase IV family.</text>
</comment>